<feature type="chain" id="PRO_0000309177" description="Threonine/serine transporter TdcC">
    <location>
        <begin position="1"/>
        <end position="443"/>
    </location>
</feature>
<feature type="transmembrane region" description="Helical" evidence="1">
    <location>
        <begin position="24"/>
        <end position="44"/>
    </location>
</feature>
<feature type="transmembrane region" description="Helical" evidence="1">
    <location>
        <begin position="45"/>
        <end position="65"/>
    </location>
</feature>
<feature type="transmembrane region" description="Helical" evidence="1">
    <location>
        <begin position="95"/>
        <end position="115"/>
    </location>
</feature>
<feature type="transmembrane region" description="Helical" evidence="1">
    <location>
        <begin position="140"/>
        <end position="160"/>
    </location>
</feature>
<feature type="transmembrane region" description="Helical" evidence="1">
    <location>
        <begin position="163"/>
        <end position="183"/>
    </location>
</feature>
<feature type="transmembrane region" description="Helical" evidence="1">
    <location>
        <begin position="207"/>
        <end position="227"/>
    </location>
</feature>
<feature type="transmembrane region" description="Helical" evidence="1">
    <location>
        <begin position="259"/>
        <end position="279"/>
    </location>
</feature>
<feature type="transmembrane region" description="Helical" evidence="1">
    <location>
        <begin position="319"/>
        <end position="339"/>
    </location>
</feature>
<feature type="transmembrane region" description="Helical" evidence="1">
    <location>
        <begin position="363"/>
        <end position="383"/>
    </location>
</feature>
<feature type="transmembrane region" description="Helical" evidence="1">
    <location>
        <begin position="385"/>
        <end position="405"/>
    </location>
</feature>
<feature type="transmembrane region" description="Helical" evidence="1">
    <location>
        <begin position="423"/>
        <end position="443"/>
    </location>
</feature>
<comment type="function">
    <text evidence="1">Involved in the import of threonine and serine into the cell, with the concomitant import of a proton (symport system).</text>
</comment>
<comment type="catalytic activity">
    <reaction evidence="1">
        <text>L-threonine(in) + H(+)(in) = L-threonine(out) + H(+)(out)</text>
        <dbReference type="Rhea" id="RHEA:28883"/>
        <dbReference type="ChEBI" id="CHEBI:15378"/>
        <dbReference type="ChEBI" id="CHEBI:57926"/>
    </reaction>
    <physiologicalReaction direction="right-to-left" evidence="1">
        <dbReference type="Rhea" id="RHEA:28885"/>
    </physiologicalReaction>
</comment>
<comment type="catalytic activity">
    <reaction evidence="1">
        <text>L-serine(in) + H(+)(in) = L-serine(out) + H(+)(out)</text>
        <dbReference type="Rhea" id="RHEA:28887"/>
        <dbReference type="ChEBI" id="CHEBI:15378"/>
        <dbReference type="ChEBI" id="CHEBI:33384"/>
    </reaction>
    <physiologicalReaction direction="right-to-left" evidence="1">
        <dbReference type="Rhea" id="RHEA:28889"/>
    </physiologicalReaction>
</comment>
<comment type="subcellular location">
    <subcellularLocation>
        <location evidence="1">Cell inner membrane</location>
        <topology evidence="1">Multi-pass membrane protein</topology>
    </subcellularLocation>
</comment>
<comment type="similarity">
    <text evidence="1">Belongs to the amino acid/polyamine transporter 2 family. SdaC/TdcC subfamily.</text>
</comment>
<gene>
    <name evidence="1" type="primary">tdcC</name>
</gene>
<sequence length="443" mass="48869">MSSTDSVVAGQAKVSTWRKTDTRWVLGLFGTAIGAGVLFFPISAGIGGLLPIIFMLILAFPIAFFCHRALARLCLSGRSISDNITDTVDQHFGHVGGVVITFLYFFAICPLLWIYGVTITNTFIAFWQHQLLLPAINRGVVALAILLVMAFFIYFGKDLMVKVMGYLVFPFITCLVLISLSLIPYWTSDIFTSFDMHSLSLFGSHGILVTVWLGIAIMVFSFNFSPIVSSFVVSKREEYEADFGREYTEQKCAKIISRASVLMVVVVMFFAFSCLFTLSPQDMAQAKQQNIPILSYLANHFSSLGSGKSTYATVLEYGASIIALVAIFKSFFGHYLGTLEGLNGLIIKFGYHGEKSQAPMKKLNMISMVIIMGSTWVIAYINPNILDLIGAMGAPIIAALLCLLPMYAVWRVPALAKYKGKASNYFVTIIGLLTILNIVYQLM</sequence>
<protein>
    <recommendedName>
        <fullName evidence="1">Threonine/serine transporter TdcC</fullName>
    </recommendedName>
    <alternativeName>
        <fullName evidence="1">H(+)/threonine-serine symporter</fullName>
    </alternativeName>
</protein>
<dbReference type="EMBL" id="AY643478">
    <property type="protein sequence ID" value="AAY43643.1"/>
    <property type="molecule type" value="Genomic_DNA"/>
</dbReference>
<dbReference type="SMR" id="Q4G4A7"/>
<dbReference type="STRING" id="636.AAW15_11990"/>
<dbReference type="GO" id="GO:0005886">
    <property type="term" value="C:plasma membrane"/>
    <property type="evidence" value="ECO:0007669"/>
    <property type="project" value="UniProtKB-SubCell"/>
</dbReference>
<dbReference type="GO" id="GO:0015194">
    <property type="term" value="F:L-serine transmembrane transporter activity"/>
    <property type="evidence" value="ECO:0007669"/>
    <property type="project" value="InterPro"/>
</dbReference>
<dbReference type="GO" id="GO:0015293">
    <property type="term" value="F:symporter activity"/>
    <property type="evidence" value="ECO:0007669"/>
    <property type="project" value="UniProtKB-UniRule"/>
</dbReference>
<dbReference type="GO" id="GO:0015565">
    <property type="term" value="F:threonine efflux transmembrane transporter activity"/>
    <property type="evidence" value="ECO:0007669"/>
    <property type="project" value="InterPro"/>
</dbReference>
<dbReference type="HAMAP" id="MF_01583">
    <property type="entry name" value="Thr_Ser_transp_TdcC"/>
    <property type="match status" value="1"/>
</dbReference>
<dbReference type="InterPro" id="IPR018227">
    <property type="entry name" value="Amino_acid_transport_2"/>
</dbReference>
<dbReference type="InterPro" id="IPR023726">
    <property type="entry name" value="Thr/Ser_transpt_TdcC"/>
</dbReference>
<dbReference type="NCBIfam" id="NF010152">
    <property type="entry name" value="PRK13629.1"/>
    <property type="match status" value="1"/>
</dbReference>
<dbReference type="PANTHER" id="PTHR35334">
    <property type="entry name" value="SERINE TRANSPORTER"/>
    <property type="match status" value="1"/>
</dbReference>
<dbReference type="PANTHER" id="PTHR35334:SF1">
    <property type="entry name" value="THREONINE_SERINE TRANSPORTER TDCC"/>
    <property type="match status" value="1"/>
</dbReference>
<keyword id="KW-0029">Amino-acid transport</keyword>
<keyword id="KW-0997">Cell inner membrane</keyword>
<keyword id="KW-1003">Cell membrane</keyword>
<keyword id="KW-0472">Membrane</keyword>
<keyword id="KW-0769">Symport</keyword>
<keyword id="KW-0812">Transmembrane</keyword>
<keyword id="KW-1133">Transmembrane helix</keyword>
<keyword id="KW-0813">Transport</keyword>
<name>TDCC_EDWTA</name>
<reference key="1">
    <citation type="journal article" date="2005" name="Microbiology">
        <title>Role of type III secretion in Edwardsiella tarda virulence.</title>
        <authorList>
            <person name="Tan Y.P."/>
            <person name="Zheng J."/>
            <person name="Tung S.L."/>
            <person name="Rosenshine I."/>
            <person name="Leung K.Y."/>
        </authorList>
    </citation>
    <scope>NUCLEOTIDE SEQUENCE [GENOMIC DNA]</scope>
    <source>
        <strain>PPD130/91</strain>
    </source>
</reference>
<evidence type="ECO:0000255" key="1">
    <source>
        <dbReference type="HAMAP-Rule" id="MF_01583"/>
    </source>
</evidence>
<proteinExistence type="inferred from homology"/>
<accession>Q4G4A7</accession>
<organism>
    <name type="scientific">Edwardsiella tarda</name>
    <dbReference type="NCBI Taxonomy" id="636"/>
    <lineage>
        <taxon>Bacteria</taxon>
        <taxon>Pseudomonadati</taxon>
        <taxon>Pseudomonadota</taxon>
        <taxon>Gammaproteobacteria</taxon>
        <taxon>Enterobacterales</taxon>
        <taxon>Hafniaceae</taxon>
        <taxon>Edwardsiella</taxon>
    </lineage>
</organism>